<sequence length="108" mass="11973">MEQFECITVEEAYQKLHQGAAVLVDIRDPQSYAMGHAPQAFHLTNDTLGAFMREHGFDTAVMVMCYHGNSSKGAAQYLLQQGYDAVYSIDGGFEAWHRRFPADVANGA</sequence>
<feature type="chain" id="PRO_1000062975" description="Thiosulfate sulfurtransferase GlpE">
    <location>
        <begin position="1"/>
        <end position="108"/>
    </location>
</feature>
<feature type="domain" description="Rhodanese" evidence="1">
    <location>
        <begin position="17"/>
        <end position="105"/>
    </location>
</feature>
<feature type="active site" description="Cysteine persulfide intermediate" evidence="1">
    <location>
        <position position="65"/>
    </location>
</feature>
<name>GLPE_SALCH</name>
<comment type="function">
    <text evidence="1">Transferase that catalyzes the transfer of sulfur from thiosulfate to thiophilic acceptors such as cyanide or dithiols. May function in a CysM-independent thiosulfate assimilation pathway by catalyzing the conversion of thiosulfate to sulfite, which can then be used for L-cysteine biosynthesis.</text>
</comment>
<comment type="catalytic activity">
    <reaction evidence="1">
        <text>thiosulfate + hydrogen cyanide = thiocyanate + sulfite + 2 H(+)</text>
        <dbReference type="Rhea" id="RHEA:16881"/>
        <dbReference type="ChEBI" id="CHEBI:15378"/>
        <dbReference type="ChEBI" id="CHEBI:17359"/>
        <dbReference type="ChEBI" id="CHEBI:18022"/>
        <dbReference type="ChEBI" id="CHEBI:18407"/>
        <dbReference type="ChEBI" id="CHEBI:33542"/>
        <dbReference type="EC" id="2.8.1.1"/>
    </reaction>
</comment>
<comment type="catalytic activity">
    <reaction evidence="1">
        <text>thiosulfate + [thioredoxin]-dithiol = [thioredoxin]-disulfide + hydrogen sulfide + sulfite + 2 H(+)</text>
        <dbReference type="Rhea" id="RHEA:83859"/>
        <dbReference type="Rhea" id="RHEA-COMP:10698"/>
        <dbReference type="Rhea" id="RHEA-COMP:10700"/>
        <dbReference type="ChEBI" id="CHEBI:15378"/>
        <dbReference type="ChEBI" id="CHEBI:17359"/>
        <dbReference type="ChEBI" id="CHEBI:29919"/>
        <dbReference type="ChEBI" id="CHEBI:29950"/>
        <dbReference type="ChEBI" id="CHEBI:33542"/>
        <dbReference type="ChEBI" id="CHEBI:50058"/>
    </reaction>
</comment>
<comment type="subcellular location">
    <subcellularLocation>
        <location evidence="1">Cytoplasm</location>
    </subcellularLocation>
</comment>
<comment type="similarity">
    <text evidence="1">Belongs to the GlpE family.</text>
</comment>
<accession>Q57IV0</accession>
<dbReference type="EC" id="2.8.1.1" evidence="1"/>
<dbReference type="EMBL" id="AE017220">
    <property type="protein sequence ID" value="AAX67362.1"/>
    <property type="molecule type" value="Genomic_DNA"/>
</dbReference>
<dbReference type="RefSeq" id="WP_000434523.1">
    <property type="nucleotide sequence ID" value="NC_006905.1"/>
</dbReference>
<dbReference type="SMR" id="Q57IV0"/>
<dbReference type="KEGG" id="sec:SCH_3456"/>
<dbReference type="HOGENOM" id="CLU_089574_14_0_6"/>
<dbReference type="Proteomes" id="UP000000538">
    <property type="component" value="Chromosome"/>
</dbReference>
<dbReference type="GO" id="GO:0005737">
    <property type="term" value="C:cytoplasm"/>
    <property type="evidence" value="ECO:0007669"/>
    <property type="project" value="UniProtKB-SubCell"/>
</dbReference>
<dbReference type="GO" id="GO:0004792">
    <property type="term" value="F:thiosulfate-cyanide sulfurtransferase activity"/>
    <property type="evidence" value="ECO:0007669"/>
    <property type="project" value="UniProtKB-UniRule"/>
</dbReference>
<dbReference type="GO" id="GO:0006071">
    <property type="term" value="P:glycerol metabolic process"/>
    <property type="evidence" value="ECO:0007669"/>
    <property type="project" value="UniProtKB-UniRule"/>
</dbReference>
<dbReference type="CDD" id="cd01444">
    <property type="entry name" value="GlpE_ST"/>
    <property type="match status" value="1"/>
</dbReference>
<dbReference type="FunFam" id="3.40.250.10:FF:000007">
    <property type="entry name" value="Thiosulfate sulfurtransferase GlpE"/>
    <property type="match status" value="1"/>
</dbReference>
<dbReference type="Gene3D" id="3.40.250.10">
    <property type="entry name" value="Rhodanese-like domain"/>
    <property type="match status" value="1"/>
</dbReference>
<dbReference type="HAMAP" id="MF_01009">
    <property type="entry name" value="Thiosulf_sulfurtr"/>
    <property type="match status" value="1"/>
</dbReference>
<dbReference type="InterPro" id="IPR050229">
    <property type="entry name" value="GlpE_sulfurtransferase"/>
</dbReference>
<dbReference type="InterPro" id="IPR001763">
    <property type="entry name" value="Rhodanese-like_dom"/>
</dbReference>
<dbReference type="InterPro" id="IPR036873">
    <property type="entry name" value="Rhodanese-like_dom_sf"/>
</dbReference>
<dbReference type="InterPro" id="IPR023695">
    <property type="entry name" value="Thiosulf_sulfurTrfase"/>
</dbReference>
<dbReference type="NCBIfam" id="NF001195">
    <property type="entry name" value="PRK00162.1"/>
    <property type="match status" value="1"/>
</dbReference>
<dbReference type="PANTHER" id="PTHR43031">
    <property type="entry name" value="FAD-DEPENDENT OXIDOREDUCTASE"/>
    <property type="match status" value="1"/>
</dbReference>
<dbReference type="PANTHER" id="PTHR43031:SF6">
    <property type="entry name" value="THIOSULFATE SULFURTRANSFERASE GLPE"/>
    <property type="match status" value="1"/>
</dbReference>
<dbReference type="Pfam" id="PF00581">
    <property type="entry name" value="Rhodanese"/>
    <property type="match status" value="1"/>
</dbReference>
<dbReference type="SMART" id="SM00450">
    <property type="entry name" value="RHOD"/>
    <property type="match status" value="1"/>
</dbReference>
<dbReference type="SUPFAM" id="SSF52821">
    <property type="entry name" value="Rhodanese/Cell cycle control phosphatase"/>
    <property type="match status" value="1"/>
</dbReference>
<dbReference type="PROSITE" id="PS50206">
    <property type="entry name" value="RHODANESE_3"/>
    <property type="match status" value="1"/>
</dbReference>
<proteinExistence type="inferred from homology"/>
<protein>
    <recommendedName>
        <fullName evidence="1">Thiosulfate sulfurtransferase GlpE</fullName>
        <ecNumber evidence="1">2.8.1.1</ecNumber>
    </recommendedName>
</protein>
<reference key="1">
    <citation type="journal article" date="2005" name="Nucleic Acids Res.">
        <title>The genome sequence of Salmonella enterica serovar Choleraesuis, a highly invasive and resistant zoonotic pathogen.</title>
        <authorList>
            <person name="Chiu C.-H."/>
            <person name="Tang P."/>
            <person name="Chu C."/>
            <person name="Hu S."/>
            <person name="Bao Q."/>
            <person name="Yu J."/>
            <person name="Chou Y.-Y."/>
            <person name="Wang H.-S."/>
            <person name="Lee Y.-S."/>
        </authorList>
    </citation>
    <scope>NUCLEOTIDE SEQUENCE [LARGE SCALE GENOMIC DNA]</scope>
    <source>
        <strain>SC-B67</strain>
    </source>
</reference>
<gene>
    <name evidence="1" type="primary">glpE</name>
    <name type="ordered locus">SCH_3456</name>
</gene>
<keyword id="KW-0963">Cytoplasm</keyword>
<keyword id="KW-0808">Transferase</keyword>
<organism>
    <name type="scientific">Salmonella choleraesuis (strain SC-B67)</name>
    <dbReference type="NCBI Taxonomy" id="321314"/>
    <lineage>
        <taxon>Bacteria</taxon>
        <taxon>Pseudomonadati</taxon>
        <taxon>Pseudomonadota</taxon>
        <taxon>Gammaproteobacteria</taxon>
        <taxon>Enterobacterales</taxon>
        <taxon>Enterobacteriaceae</taxon>
        <taxon>Salmonella</taxon>
    </lineage>
</organism>
<evidence type="ECO:0000255" key="1">
    <source>
        <dbReference type="HAMAP-Rule" id="MF_01009"/>
    </source>
</evidence>